<evidence type="ECO:0000250" key="1"/>
<evidence type="ECO:0000269" key="2">
    <source>
    </source>
</evidence>
<evidence type="ECO:0000269" key="3">
    <source>
    </source>
</evidence>
<evidence type="ECO:0000269" key="4">
    <source>
    </source>
</evidence>
<evidence type="ECO:0000305" key="5"/>
<evidence type="ECO:0007744" key="6">
    <source>
        <dbReference type="PDB" id="4F0T"/>
    </source>
</evidence>
<evidence type="ECO:0007829" key="7">
    <source>
        <dbReference type="PDB" id="4F0T"/>
    </source>
</evidence>
<gene>
    <name type="primary">cpcB</name>
    <name type="ordered locus">sll1577</name>
</gene>
<comment type="function">
    <text>Light-harvesting photosynthetic bile pigment-protein from the phycobiliprotein complex (phycobilisome, PBS). Phycocyanin is the major phycobiliprotein in the PBS rod.</text>
</comment>
<comment type="subunit">
    <text evidence="2 3 4">Heterodimer of an alpha and a beta chain, which further assembles into trimers. The trimers assemble into hexamers, although these were not seen in the crystallographic studies (PubMed:23201474). Part of 2 PBS rod complexes, the conventional CpcG-PBS rod and a photosystem I-specific CpcL-PBS rod, both of which include ferredoxin--NADP reductase (petH) (PubMed:31015331). Interacts with rod linker CpcC2 via the latter's N-terminal PBS-linker domain (PubMed:21923764).</text>
</comment>
<comment type="subcellular location">
    <subcellularLocation>
        <location evidence="1">Cellular thylakoid membrane</location>
        <topology evidence="1">Peripheral membrane protein</topology>
        <orientation evidence="1">Cytoplasmic side</orientation>
    </subcellularLocation>
    <text evidence="4">Part of the phycobilisome rod.</text>
</comment>
<comment type="PTM">
    <text evidence="3">Contains two covalently linked bilin chromophores.</text>
</comment>
<comment type="similarity">
    <text evidence="5">Belongs to the phycobiliprotein family.</text>
</comment>
<reference key="1">
    <citation type="online journal article" date="1995" name="Plant Gene Register">
        <title>Cloning and sequence analysis of the genes encoding CpcB and CpcA from Synechocystis sp. PCC 6803.</title>
        <authorList>
            <person name="Plank T."/>
            <person name="Anderson L.K."/>
        </authorList>
        <locator>PGR95-087</locator>
    </citation>
    <scope>NUCLEOTIDE SEQUENCE [GENOMIC DNA]</scope>
</reference>
<reference key="2">
    <citation type="journal article" date="1996" name="DNA Res.">
        <title>Sequence analysis of the genome of the unicellular cyanobacterium Synechocystis sp. strain PCC6803. II. Sequence determination of the entire genome and assignment of potential protein-coding regions.</title>
        <authorList>
            <person name="Kaneko T."/>
            <person name="Sato S."/>
            <person name="Kotani H."/>
            <person name="Tanaka A."/>
            <person name="Asamizu E."/>
            <person name="Nakamura Y."/>
            <person name="Miyajima N."/>
            <person name="Hirosawa M."/>
            <person name="Sugiura M."/>
            <person name="Sasamoto S."/>
            <person name="Kimura T."/>
            <person name="Hosouchi T."/>
            <person name="Matsuno A."/>
            <person name="Muraki A."/>
            <person name="Nakazaki N."/>
            <person name="Naruo K."/>
            <person name="Okumura S."/>
            <person name="Shimpo S."/>
            <person name="Takeuchi C."/>
            <person name="Wada T."/>
            <person name="Watanabe A."/>
            <person name="Yamada M."/>
            <person name="Yasuda M."/>
            <person name="Tabata S."/>
        </authorList>
    </citation>
    <scope>NUCLEOTIDE SEQUENCE [LARGE SCALE GENOMIC DNA]</scope>
    <source>
        <strain>ATCC 27184 / PCC 6803 / Kazusa</strain>
    </source>
</reference>
<reference key="3">
    <citation type="journal article" date="1997" name="Electrophoresis">
        <title>Towards a proteome project of cyanobacterium Synechocystis sp. strain PCC6803: linking 130 protein spots with their respective genes.</title>
        <authorList>
            <person name="Sazuka T."/>
            <person name="Ohara O."/>
        </authorList>
    </citation>
    <scope>PROTEIN SEQUENCE OF 1-16</scope>
</reference>
<reference key="4">
    <citation type="journal article" date="2019" name="MBio">
        <title>Phycobilisomes Harbor FNRL in Cyanobacteria.</title>
        <authorList>
            <person name="Liu H."/>
            <person name="Weisz D.A."/>
            <person name="Zhang M.M."/>
            <person name="Cheng M."/>
            <person name="Zhang B."/>
            <person name="Zhang H."/>
            <person name="Gerstenecker G.S."/>
            <person name="Pakrasi H.B."/>
            <person name="Gross M.L."/>
            <person name="Blankenship R.E."/>
        </authorList>
    </citation>
    <scope>PROTEIN SEQUENCE OF 1-7</scope>
    <scope>SUBUNIT</scope>
    <source>
        <strain>ATCC 27184 / PCC 6803 / Kazusa</strain>
    </source>
</reference>
<reference key="5">
    <citation type="journal article" date="2011" name="Mol. Microbiol.">
        <title>Crystal structure of the N-terminal domain of linker L(R) and the assembly of cyanobacterial phycobilisome rods.</title>
        <authorList>
            <person name="Gao X."/>
            <person name="Zhang N."/>
            <person name="Wei T.D."/>
            <person name="Su H.N."/>
            <person name="Xie B.B."/>
            <person name="Dong C.C."/>
            <person name="Zhang X.Y."/>
            <person name="Chen X.L."/>
            <person name="Zhou B.C."/>
            <person name="Wang Z.X."/>
            <person name="Wu J.W."/>
            <person name="Zhang Y.Z."/>
        </authorList>
    </citation>
    <scope>INTERACTION WITH CPCC2</scope>
    <scope>SUBUNIT</scope>
    <source>
        <strain>ATCC 27184 / PCC 6803 / Kazusa</strain>
    </source>
</reference>
<reference evidence="6" key="6">
    <citation type="journal article" date="2013" name="Biochim. Biophys. Acta">
        <title>Allophycocyanin and phycocyanin crystal structures reveal facets of phycobilisome assembly.</title>
        <authorList>
            <person name="Marx A."/>
            <person name="Adir N."/>
        </authorList>
    </citation>
    <scope>X-RAY CRYSTALLOGRAPHY (2.25 ANGSTROMS) IN COMPLEX WITH PHYCOCYANOBILIN CHROMOPHORE</scope>
    <scope>SUBUNIT</scope>
    <scope>METHYLATION AT ASN-72</scope>
    <source>
        <strain>ATCC 27184 / PCC 6803 / Kazusa</strain>
    </source>
</reference>
<keyword id="KW-0002">3D-structure</keyword>
<keyword id="KW-0042">Antenna complex</keyword>
<keyword id="KW-0089">Bile pigment</keyword>
<keyword id="KW-0157">Chromophore</keyword>
<keyword id="KW-0903">Direct protein sequencing</keyword>
<keyword id="KW-0249">Electron transport</keyword>
<keyword id="KW-0472">Membrane</keyword>
<keyword id="KW-0488">Methylation</keyword>
<keyword id="KW-0602">Photosynthesis</keyword>
<keyword id="KW-0605">Phycobilisome</keyword>
<keyword id="KW-1185">Reference proteome</keyword>
<keyword id="KW-0793">Thylakoid</keyword>
<keyword id="KW-0813">Transport</keyword>
<organism>
    <name type="scientific">Synechocystis sp. (strain ATCC 27184 / PCC 6803 / Kazusa)</name>
    <dbReference type="NCBI Taxonomy" id="1111708"/>
    <lineage>
        <taxon>Bacteria</taxon>
        <taxon>Bacillati</taxon>
        <taxon>Cyanobacteriota</taxon>
        <taxon>Cyanophyceae</taxon>
        <taxon>Synechococcales</taxon>
        <taxon>Merismopediaceae</taxon>
        <taxon>Synechocystis</taxon>
    </lineage>
</organism>
<sequence length="172" mass="18126">MFDVFTRVVSQADARGEYLSGSQLDALSATVAEGNKRIDSVNRITGNASAIVSNAARALFAEQPQLIQPGGNAYTSRRMAACLRDMEIILRYVTYATFTGDASVLEDRCLNGLRETYVALGVPGASVAAGVQKMKEAALDIVNDPNGITRGDCSAIVAEIAGYFDRAAAAVA</sequence>
<accession>Q54714</accession>
<accession>P73205</accession>
<proteinExistence type="evidence at protein level"/>
<dbReference type="EMBL" id="U34930">
    <property type="protein sequence ID" value="AAA91032.1"/>
    <property type="molecule type" value="Genomic_DNA"/>
</dbReference>
<dbReference type="EMBL" id="BA000022">
    <property type="protein sequence ID" value="BAA17232.1"/>
    <property type="molecule type" value="Genomic_DNA"/>
</dbReference>
<dbReference type="PIR" id="S75318">
    <property type="entry name" value="S75318"/>
</dbReference>
<dbReference type="PDB" id="4F0T">
    <property type="method" value="X-ray"/>
    <property type="resolution" value="2.25 A"/>
    <property type="chains" value="B=1-172"/>
</dbReference>
<dbReference type="PDB" id="7SC8">
    <property type="method" value="EM"/>
    <property type="resolution" value="2.10 A"/>
    <property type="chains" value="AB/AD/AF/AH/AJ/AL/AN/AP/AR/AT/AV/AX/AZ/BB/BD/BF/BH/BJ=1-172"/>
</dbReference>
<dbReference type="PDB" id="7SCA">
    <property type="method" value="EM"/>
    <property type="resolution" value="2.10 A"/>
    <property type="chains" value="AB/AD/AF/AH/AJ/AL/AN/AP/AR/AT/AV/AX/AZ/BB/BD/BF/BH/BJ=1-172"/>
</dbReference>
<dbReference type="PDB" id="8HFQ">
    <property type="method" value="EM"/>
    <property type="resolution" value="2.64 A"/>
    <property type="chains" value="B/D/F/H/J/L/N/P/R/T/V/X/Z/b/d/f/h/j=1-172"/>
</dbReference>
<dbReference type="PDB" id="8TO5">
    <property type="method" value="EM"/>
    <property type="resolution" value="1.87 A"/>
    <property type="chains" value="N/P/R/T/V/X=1-172"/>
</dbReference>
<dbReference type="PDB" id="8TRO">
    <property type="method" value="EM"/>
    <property type="resolution" value="1.90 A"/>
    <property type="chains" value="1/3/5/7/9/B/D/F/H/J/L/N/P/R/T/V/X/Z=1-172"/>
</dbReference>
<dbReference type="PDBsum" id="4F0T"/>
<dbReference type="PDBsum" id="7SC8"/>
<dbReference type="PDBsum" id="7SCA"/>
<dbReference type="PDBsum" id="8HFQ"/>
<dbReference type="PDBsum" id="8TO5"/>
<dbReference type="PDBsum" id="8TRO"/>
<dbReference type="EMDB" id="EMD-25029"/>
<dbReference type="EMDB" id="EMD-25031"/>
<dbReference type="EMDB" id="EMD-34724"/>
<dbReference type="EMDB" id="EMD-41435"/>
<dbReference type="EMDB" id="EMD-41585"/>
<dbReference type="SMR" id="Q54714"/>
<dbReference type="IntAct" id="Q54714">
    <property type="interactions" value="5"/>
</dbReference>
<dbReference type="STRING" id="1148.gene:10498095"/>
<dbReference type="iPTMnet" id="Q54714"/>
<dbReference type="PaxDb" id="1148-1652309"/>
<dbReference type="EnsemblBacteria" id="BAA17232">
    <property type="protein sequence ID" value="BAA17232"/>
    <property type="gene ID" value="BAA17232"/>
</dbReference>
<dbReference type="KEGG" id="syn:sll1577"/>
<dbReference type="eggNOG" id="ENOG502Z7NE">
    <property type="taxonomic scope" value="Bacteria"/>
</dbReference>
<dbReference type="InParanoid" id="Q54714"/>
<dbReference type="PhylomeDB" id="Q54714"/>
<dbReference type="EvolutionaryTrace" id="Q54714"/>
<dbReference type="Proteomes" id="UP000001425">
    <property type="component" value="Chromosome"/>
</dbReference>
<dbReference type="GO" id="GO:0030089">
    <property type="term" value="C:phycobilisome"/>
    <property type="evidence" value="ECO:0000314"/>
    <property type="project" value="UniProtKB"/>
</dbReference>
<dbReference type="GO" id="GO:0031676">
    <property type="term" value="C:plasma membrane-derived thylakoid membrane"/>
    <property type="evidence" value="ECO:0007669"/>
    <property type="project" value="UniProtKB-SubCell"/>
</dbReference>
<dbReference type="GO" id="GO:0015979">
    <property type="term" value="P:photosynthesis"/>
    <property type="evidence" value="ECO:0007669"/>
    <property type="project" value="UniProtKB-KW"/>
</dbReference>
<dbReference type="CDD" id="cd14768">
    <property type="entry name" value="PC_PEC_beta"/>
    <property type="match status" value="1"/>
</dbReference>
<dbReference type="FunFam" id="1.10.490.20:FF:000002">
    <property type="entry name" value="C-phycocyanin beta chain"/>
    <property type="match status" value="1"/>
</dbReference>
<dbReference type="Gene3D" id="1.10.490.20">
    <property type="entry name" value="Phycocyanins"/>
    <property type="match status" value="1"/>
</dbReference>
<dbReference type="InterPro" id="IPR009050">
    <property type="entry name" value="Globin-like_sf"/>
</dbReference>
<dbReference type="InterPro" id="IPR012128">
    <property type="entry name" value="Phycobilisome_asu/bsu"/>
</dbReference>
<dbReference type="InterPro" id="IPR038719">
    <property type="entry name" value="Phycobilisome_asu/bsu_sf"/>
</dbReference>
<dbReference type="InterPro" id="IPR006247">
    <property type="entry name" value="Phycocyanin_b"/>
</dbReference>
<dbReference type="NCBIfam" id="TIGR01339">
    <property type="entry name" value="phycocy_beta"/>
    <property type="match status" value="1"/>
</dbReference>
<dbReference type="PANTHER" id="PTHR34011:SF7">
    <property type="entry name" value="C-PHYCOCYANIN BETA SUBUNIT"/>
    <property type="match status" value="1"/>
</dbReference>
<dbReference type="PANTHER" id="PTHR34011">
    <property type="entry name" value="PHYCOBILISOME 32.1 KDA LINKER POLYPEPTIDE, PHYCOCYANIN-ASSOCIATED, ROD 2-RELATED"/>
    <property type="match status" value="1"/>
</dbReference>
<dbReference type="Pfam" id="PF00502">
    <property type="entry name" value="Phycobilisome"/>
    <property type="match status" value="1"/>
</dbReference>
<dbReference type="PIRSF" id="PIRSF000081">
    <property type="entry name" value="Phycocyanin"/>
    <property type="match status" value="1"/>
</dbReference>
<dbReference type="SUPFAM" id="SSF46458">
    <property type="entry name" value="Globin-like"/>
    <property type="match status" value="1"/>
</dbReference>
<name>PHCB_SYNY3</name>
<protein>
    <recommendedName>
        <fullName>C-phycocyanin beta subunit</fullName>
    </recommendedName>
</protein>
<feature type="chain" id="PRO_0000199161" description="C-phycocyanin beta subunit">
    <location>
        <begin position="1"/>
        <end position="172"/>
    </location>
</feature>
<feature type="binding site" description="covalent" evidence="3 6">
    <location>
        <position position="82"/>
    </location>
    <ligand>
        <name>(2R,3E)-phycocyanobilin</name>
        <dbReference type="ChEBI" id="CHEBI:85275"/>
        <label>1</label>
    </ligand>
</feature>
<feature type="binding site" description="covalent" evidence="3 6">
    <location>
        <position position="153"/>
    </location>
    <ligand>
        <name>(2R,3E)-phycocyanobilin</name>
        <dbReference type="ChEBI" id="CHEBI:85275"/>
        <label>2</label>
    </ligand>
</feature>
<feature type="modified residue" description="N4-methylasparagine" evidence="3 6">
    <location>
        <position position="72"/>
    </location>
</feature>
<feature type="sequence conflict" description="In Ref. 1; AAA91032." evidence="5" ref="1">
    <original>A</original>
    <variation>V</variation>
    <location>
        <position position="61"/>
    </location>
</feature>
<feature type="helix" evidence="7">
    <location>
        <begin position="4"/>
        <end position="13"/>
    </location>
</feature>
<feature type="turn" evidence="7">
    <location>
        <begin position="14"/>
        <end position="16"/>
    </location>
</feature>
<feature type="helix" evidence="7">
    <location>
        <begin position="21"/>
        <end position="32"/>
    </location>
</feature>
<feature type="helix" evidence="7">
    <location>
        <begin position="34"/>
        <end position="46"/>
    </location>
</feature>
<feature type="helix" evidence="7">
    <location>
        <begin position="48"/>
        <end position="62"/>
    </location>
</feature>
<feature type="helix" evidence="7">
    <location>
        <begin position="64"/>
        <end position="66"/>
    </location>
</feature>
<feature type="helix" evidence="7">
    <location>
        <begin position="76"/>
        <end position="99"/>
    </location>
</feature>
<feature type="helix" evidence="7">
    <location>
        <begin position="103"/>
        <end position="108"/>
    </location>
</feature>
<feature type="turn" evidence="7">
    <location>
        <begin position="109"/>
        <end position="112"/>
    </location>
</feature>
<feature type="helix" evidence="7">
    <location>
        <begin position="113"/>
        <end position="120"/>
    </location>
</feature>
<feature type="helix" evidence="7">
    <location>
        <begin position="124"/>
        <end position="142"/>
    </location>
</feature>
<feature type="helix" evidence="7">
    <location>
        <begin position="154"/>
        <end position="169"/>
    </location>
</feature>